<comment type="function">
    <text evidence="1 2">Catalyzes the transfer of diphosphate from ATP to 6-hydroxymethyl-7,8-dihydropterin (6-HMD), leading to 6-hydroxymethyl-7,8-dihydropterin diphosphate (6-HMDP).</text>
</comment>
<comment type="catalytic activity">
    <reaction evidence="1 2">
        <text>6-hydroxymethyl-7,8-dihydropterin + ATP = (7,8-dihydropterin-6-yl)methyl diphosphate + AMP + H(+)</text>
        <dbReference type="Rhea" id="RHEA:11412"/>
        <dbReference type="ChEBI" id="CHEBI:15378"/>
        <dbReference type="ChEBI" id="CHEBI:30616"/>
        <dbReference type="ChEBI" id="CHEBI:44841"/>
        <dbReference type="ChEBI" id="CHEBI:72950"/>
        <dbReference type="ChEBI" id="CHEBI:456215"/>
        <dbReference type="EC" id="2.7.6.3"/>
    </reaction>
</comment>
<comment type="cofactor">
    <cofactor evidence="1">
        <name>Mg(2+)</name>
        <dbReference type="ChEBI" id="CHEBI:18420"/>
    </cofactor>
</comment>
<comment type="pathway">
    <text evidence="1 2">Cofactor biosynthesis; 5,6,7,8-tetrahydromethanopterin biosynthesis.</text>
</comment>
<comment type="similarity">
    <text evidence="1">Belongs to the archaeal 6-HMPDK family.</text>
</comment>
<organism>
    <name type="scientific">Methanocaldococcus jannaschii (strain ATCC 43067 / DSM 2661 / JAL-1 / JCM 10045 / NBRC 100440)</name>
    <name type="common">Methanococcus jannaschii</name>
    <dbReference type="NCBI Taxonomy" id="243232"/>
    <lineage>
        <taxon>Archaea</taxon>
        <taxon>Methanobacteriati</taxon>
        <taxon>Methanobacteriota</taxon>
        <taxon>Methanomada group</taxon>
        <taxon>Methanococci</taxon>
        <taxon>Methanococcales</taxon>
        <taxon>Methanocaldococcaceae</taxon>
        <taxon>Methanocaldococcus</taxon>
    </lineage>
</organism>
<sequence>MDMKEWEIFYNKIMEDFGFDKDKDVESAVILNNILENANTIPVDKLKDIIEGREVFIFGAGPSIKKHINILKELREINYKNPIIVADGACKAFLEENIIPDIIVSDLDGDLEALFECNRKGSIIVVHAHGDNIEKIKKYVPKLKNVVGSCQIPNYKELNLRNVINFGGFTDGDRCCFLAYHFKAKKLILGGMDFGIYITKYSRPNIKEDIAIGDEIKIKKLEYAKTLINYLKDKIEIEFLK</sequence>
<reference key="1">
    <citation type="journal article" date="1996" name="Science">
        <title>Complete genome sequence of the methanogenic archaeon, Methanococcus jannaschii.</title>
        <authorList>
            <person name="Bult C.J."/>
            <person name="White O."/>
            <person name="Olsen G.J."/>
            <person name="Zhou L."/>
            <person name="Fleischmann R.D."/>
            <person name="Sutton G.G."/>
            <person name="Blake J.A."/>
            <person name="FitzGerald L.M."/>
            <person name="Clayton R.A."/>
            <person name="Gocayne J.D."/>
            <person name="Kerlavage A.R."/>
            <person name="Dougherty B.A."/>
            <person name="Tomb J.-F."/>
            <person name="Adams M.D."/>
            <person name="Reich C.I."/>
            <person name="Overbeek R."/>
            <person name="Kirkness E.F."/>
            <person name="Weinstock K.G."/>
            <person name="Merrick J.M."/>
            <person name="Glodek A."/>
            <person name="Scott J.L."/>
            <person name="Geoghagen N.S.M."/>
            <person name="Weidman J.F."/>
            <person name="Fuhrmann J.L."/>
            <person name="Nguyen D."/>
            <person name="Utterback T.R."/>
            <person name="Kelley J.M."/>
            <person name="Peterson J.D."/>
            <person name="Sadow P.W."/>
            <person name="Hanna M.C."/>
            <person name="Cotton M.D."/>
            <person name="Roberts K.M."/>
            <person name="Hurst M.A."/>
            <person name="Kaine B.P."/>
            <person name="Borodovsky M."/>
            <person name="Klenk H.-P."/>
            <person name="Fraser C.M."/>
            <person name="Smith H.O."/>
            <person name="Woese C.R."/>
            <person name="Venter J.C."/>
        </authorList>
    </citation>
    <scope>NUCLEOTIDE SEQUENCE [LARGE SCALE GENOMIC DNA]</scope>
    <source>
        <strain>ATCC 43067 / DSM 2661 / JAL-1 / JCM 10045 / NBRC 100440</strain>
    </source>
</reference>
<reference key="2">
    <citation type="journal article" date="2012" name="ACS Chem. Biol.">
        <title>Comparative genomics guided discovery of two missing archaeal enzyme families involved in the biosynthesis of the pterin moiety of tetrahydromethanopterin and tetrahydrofolate.</title>
        <authorList>
            <person name="Crecy-Lagard V.D."/>
            <person name="Phillips G."/>
            <person name="Grochowski L.L."/>
            <person name="Yacoubi B.E."/>
            <person name="Jenney F."/>
            <person name="Adams M.W."/>
            <person name="Murzin A.G."/>
            <person name="White R.H."/>
        </authorList>
    </citation>
    <scope>FUNCTION</scope>
    <scope>CATALYTIC ACTIVITY</scope>
    <scope>GENE NAME</scope>
    <scope>PATHWAY</scope>
</reference>
<dbReference type="EC" id="2.7.6.3" evidence="1 2"/>
<dbReference type="EMBL" id="L77117">
    <property type="protein sequence ID" value="AAB99656.1"/>
    <property type="molecule type" value="Genomic_DNA"/>
</dbReference>
<dbReference type="PIR" id="H64503">
    <property type="entry name" value="H64503"/>
</dbReference>
<dbReference type="RefSeq" id="WP_010871158.1">
    <property type="nucleotide sequence ID" value="NC_000909.1"/>
</dbReference>
<dbReference type="PDB" id="8SBU">
    <property type="method" value="X-ray"/>
    <property type="resolution" value="2.20 A"/>
    <property type="chains" value="A/B=1-241"/>
</dbReference>
<dbReference type="PDB" id="8SD5">
    <property type="method" value="X-ray"/>
    <property type="resolution" value="2.80 A"/>
    <property type="chains" value="A/B/C/D=1-241"/>
</dbReference>
<dbReference type="PDBsum" id="8SBU"/>
<dbReference type="PDBsum" id="8SD5"/>
<dbReference type="SMR" id="Q59028"/>
<dbReference type="FunCoup" id="Q59028">
    <property type="interactions" value="7"/>
</dbReference>
<dbReference type="STRING" id="243232.MJ_1634"/>
<dbReference type="PaxDb" id="243232-MJ_1634"/>
<dbReference type="EnsemblBacteria" id="AAB99656">
    <property type="protein sequence ID" value="AAB99656"/>
    <property type="gene ID" value="MJ_1634"/>
</dbReference>
<dbReference type="GeneID" id="1452543"/>
<dbReference type="KEGG" id="mja:MJ_1634"/>
<dbReference type="eggNOG" id="arCOG04303">
    <property type="taxonomic scope" value="Archaea"/>
</dbReference>
<dbReference type="HOGENOM" id="CLU_093043_0_0_2"/>
<dbReference type="InParanoid" id="Q59028"/>
<dbReference type="OrthoDB" id="34207at2157"/>
<dbReference type="PhylomeDB" id="Q59028"/>
<dbReference type="BioCyc" id="MetaCyc:MONOMER-17934"/>
<dbReference type="UniPathway" id="UPA00065"/>
<dbReference type="Proteomes" id="UP000000805">
    <property type="component" value="Chromosome"/>
</dbReference>
<dbReference type="GO" id="GO:0003848">
    <property type="term" value="F:2-amino-4-hydroxy-6-hydroxymethyldihydropteridine diphosphokinase activity"/>
    <property type="evidence" value="ECO:0007669"/>
    <property type="project" value="UniProtKB-UniRule"/>
</dbReference>
<dbReference type="GO" id="GO:0005524">
    <property type="term" value="F:ATP binding"/>
    <property type="evidence" value="ECO:0007669"/>
    <property type="project" value="UniProtKB-UniRule"/>
</dbReference>
<dbReference type="GO" id="GO:0016301">
    <property type="term" value="F:kinase activity"/>
    <property type="evidence" value="ECO:0007669"/>
    <property type="project" value="UniProtKB-KW"/>
</dbReference>
<dbReference type="GO" id="GO:0000287">
    <property type="term" value="F:magnesium ion binding"/>
    <property type="evidence" value="ECO:0007669"/>
    <property type="project" value="UniProtKB-UniRule"/>
</dbReference>
<dbReference type="GO" id="GO:0004788">
    <property type="term" value="F:thiamine diphosphokinase activity"/>
    <property type="evidence" value="ECO:0007669"/>
    <property type="project" value="InterPro"/>
</dbReference>
<dbReference type="GO" id="GO:2001118">
    <property type="term" value="P:tetrahydromethanopterin biosynthetic process"/>
    <property type="evidence" value="ECO:0007669"/>
    <property type="project" value="UniProtKB-UniRule"/>
</dbReference>
<dbReference type="GO" id="GO:0009229">
    <property type="term" value="P:thiamine diphosphate biosynthetic process"/>
    <property type="evidence" value="ECO:0007669"/>
    <property type="project" value="InterPro"/>
</dbReference>
<dbReference type="HAMAP" id="MF_02131">
    <property type="entry name" value="HMPDK_arch"/>
    <property type="match status" value="1"/>
</dbReference>
<dbReference type="InterPro" id="IPR027510">
    <property type="entry name" value="HMPDK_MptE"/>
</dbReference>
<dbReference type="InterPro" id="IPR002826">
    <property type="entry name" value="MptE-like"/>
</dbReference>
<dbReference type="InterPro" id="IPR036759">
    <property type="entry name" value="TPK_catalytic_sf"/>
</dbReference>
<dbReference type="PANTHER" id="PTHR39648">
    <property type="entry name" value="6-HYDROXYMETHYL-7,8-DIHYDROPTERIN PYROPHOSPHOKINASE"/>
    <property type="match status" value="1"/>
</dbReference>
<dbReference type="PANTHER" id="PTHR39648:SF1">
    <property type="entry name" value="6-HYDROXYMETHYL-7,8-DIHYDROPTERIN PYROPHOSPHOKINASE"/>
    <property type="match status" value="1"/>
</dbReference>
<dbReference type="Pfam" id="PF01973">
    <property type="entry name" value="MptE-like"/>
    <property type="match status" value="1"/>
</dbReference>
<dbReference type="SUPFAM" id="SSF63999">
    <property type="entry name" value="Thiamin pyrophosphokinase, catalytic domain"/>
    <property type="match status" value="1"/>
</dbReference>
<accession>Q59028</accession>
<feature type="chain" id="PRO_0000107449" description="6-hydroxymethyl-7,8-dihydropterin pyrophosphokinase">
    <location>
        <begin position="1"/>
        <end position="241"/>
    </location>
</feature>
<name>MPTE_METJA</name>
<protein>
    <recommendedName>
        <fullName evidence="1">6-hydroxymethyl-7,8-dihydropterin pyrophosphokinase</fullName>
        <shortName evidence="1">HPPK</shortName>
        <ecNumber evidence="1 2">2.7.6.3</ecNumber>
    </recommendedName>
    <alternativeName>
        <fullName evidence="1">2-amino-4-hydroxy-6-hydroxymethyldihydropteridine pyrophosphokinase</fullName>
    </alternativeName>
    <alternativeName>
        <fullName evidence="1">6-hydroxymethyl-7,8-dihydropterin diphosphokinase</fullName>
        <shortName evidence="1 3">6-HMPDK</shortName>
    </alternativeName>
    <alternativeName>
        <fullName evidence="1 3">7,8-dihydro-6-hydroxymethylpterin diphosphokinase</fullName>
    </alternativeName>
    <alternativeName>
        <fullName evidence="1">7,8-dihydro-6-hydroxymethylpterin pyrophosphokinase</fullName>
        <shortName evidence="1">PPPK</shortName>
    </alternativeName>
</protein>
<keyword id="KW-0002">3D-structure</keyword>
<keyword id="KW-0067">ATP-binding</keyword>
<keyword id="KW-0418">Kinase</keyword>
<keyword id="KW-0460">Magnesium</keyword>
<keyword id="KW-0547">Nucleotide-binding</keyword>
<keyword id="KW-1185">Reference proteome</keyword>
<keyword id="KW-0808">Transferase</keyword>
<evidence type="ECO:0000255" key="1">
    <source>
        <dbReference type="HAMAP-Rule" id="MF_02131"/>
    </source>
</evidence>
<evidence type="ECO:0000269" key="2">
    <source>
    </source>
</evidence>
<evidence type="ECO:0000303" key="3">
    <source>
    </source>
</evidence>
<gene>
    <name evidence="1 3" type="primary">mptE</name>
    <name type="ordered locus">MJ1634</name>
</gene>
<proteinExistence type="evidence at protein level"/>